<keyword id="KW-0030">Aminoacyl-tRNA synthetase</keyword>
<keyword id="KW-0067">ATP-binding</keyword>
<keyword id="KW-0963">Cytoplasm</keyword>
<keyword id="KW-0436">Ligase</keyword>
<keyword id="KW-0547">Nucleotide-binding</keyword>
<keyword id="KW-0648">Protein biosynthesis</keyword>
<dbReference type="EC" id="6.1.1.11" evidence="1"/>
<dbReference type="EMBL" id="CP000436">
    <property type="protein sequence ID" value="ABI25350.1"/>
    <property type="molecule type" value="Genomic_DNA"/>
</dbReference>
<dbReference type="SMR" id="Q0I471"/>
<dbReference type="KEGG" id="hso:HS_1075"/>
<dbReference type="eggNOG" id="COG0172">
    <property type="taxonomic scope" value="Bacteria"/>
</dbReference>
<dbReference type="HOGENOM" id="CLU_023797_1_1_6"/>
<dbReference type="UniPathway" id="UPA00906">
    <property type="reaction ID" value="UER00895"/>
</dbReference>
<dbReference type="GO" id="GO:0005737">
    <property type="term" value="C:cytoplasm"/>
    <property type="evidence" value="ECO:0007669"/>
    <property type="project" value="UniProtKB-SubCell"/>
</dbReference>
<dbReference type="GO" id="GO:0005524">
    <property type="term" value="F:ATP binding"/>
    <property type="evidence" value="ECO:0007669"/>
    <property type="project" value="UniProtKB-UniRule"/>
</dbReference>
<dbReference type="GO" id="GO:0004828">
    <property type="term" value="F:serine-tRNA ligase activity"/>
    <property type="evidence" value="ECO:0007669"/>
    <property type="project" value="UniProtKB-UniRule"/>
</dbReference>
<dbReference type="GO" id="GO:0016260">
    <property type="term" value="P:selenocysteine biosynthetic process"/>
    <property type="evidence" value="ECO:0007669"/>
    <property type="project" value="UniProtKB-UniRule"/>
</dbReference>
<dbReference type="GO" id="GO:0006434">
    <property type="term" value="P:seryl-tRNA aminoacylation"/>
    <property type="evidence" value="ECO:0007669"/>
    <property type="project" value="UniProtKB-UniRule"/>
</dbReference>
<dbReference type="CDD" id="cd00770">
    <property type="entry name" value="SerRS_core"/>
    <property type="match status" value="1"/>
</dbReference>
<dbReference type="FunFam" id="3.30.930.10:FF:000018">
    <property type="entry name" value="Serine--tRNA ligase"/>
    <property type="match status" value="1"/>
</dbReference>
<dbReference type="Gene3D" id="3.30.930.10">
    <property type="entry name" value="Bira Bifunctional Protein, Domain 2"/>
    <property type="match status" value="1"/>
</dbReference>
<dbReference type="Gene3D" id="1.10.287.40">
    <property type="entry name" value="Serine-tRNA synthetase, tRNA binding domain"/>
    <property type="match status" value="1"/>
</dbReference>
<dbReference type="HAMAP" id="MF_00176">
    <property type="entry name" value="Ser_tRNA_synth_type1"/>
    <property type="match status" value="1"/>
</dbReference>
<dbReference type="InterPro" id="IPR002314">
    <property type="entry name" value="aa-tRNA-synt_IIb"/>
</dbReference>
<dbReference type="InterPro" id="IPR006195">
    <property type="entry name" value="aa-tRNA-synth_II"/>
</dbReference>
<dbReference type="InterPro" id="IPR045864">
    <property type="entry name" value="aa-tRNA-synth_II/BPL/LPL"/>
</dbReference>
<dbReference type="InterPro" id="IPR002317">
    <property type="entry name" value="Ser-tRNA-ligase_type_1"/>
</dbReference>
<dbReference type="InterPro" id="IPR015866">
    <property type="entry name" value="Ser-tRNA-synth_1_N"/>
</dbReference>
<dbReference type="InterPro" id="IPR042103">
    <property type="entry name" value="SerRS_1_N_sf"/>
</dbReference>
<dbReference type="InterPro" id="IPR033729">
    <property type="entry name" value="SerRS_core"/>
</dbReference>
<dbReference type="InterPro" id="IPR010978">
    <property type="entry name" value="tRNA-bd_arm"/>
</dbReference>
<dbReference type="NCBIfam" id="TIGR00414">
    <property type="entry name" value="serS"/>
    <property type="match status" value="1"/>
</dbReference>
<dbReference type="PANTHER" id="PTHR43697:SF1">
    <property type="entry name" value="SERINE--TRNA LIGASE"/>
    <property type="match status" value="1"/>
</dbReference>
<dbReference type="PANTHER" id="PTHR43697">
    <property type="entry name" value="SERYL-TRNA SYNTHETASE"/>
    <property type="match status" value="1"/>
</dbReference>
<dbReference type="Pfam" id="PF02403">
    <property type="entry name" value="Seryl_tRNA_N"/>
    <property type="match status" value="1"/>
</dbReference>
<dbReference type="Pfam" id="PF00587">
    <property type="entry name" value="tRNA-synt_2b"/>
    <property type="match status" value="1"/>
</dbReference>
<dbReference type="PIRSF" id="PIRSF001529">
    <property type="entry name" value="Ser-tRNA-synth_IIa"/>
    <property type="match status" value="1"/>
</dbReference>
<dbReference type="PRINTS" id="PR00981">
    <property type="entry name" value="TRNASYNTHSER"/>
</dbReference>
<dbReference type="SUPFAM" id="SSF55681">
    <property type="entry name" value="Class II aaRS and biotin synthetases"/>
    <property type="match status" value="1"/>
</dbReference>
<dbReference type="SUPFAM" id="SSF46589">
    <property type="entry name" value="tRNA-binding arm"/>
    <property type="match status" value="1"/>
</dbReference>
<dbReference type="PROSITE" id="PS50862">
    <property type="entry name" value="AA_TRNA_LIGASE_II"/>
    <property type="match status" value="1"/>
</dbReference>
<organism>
    <name type="scientific">Histophilus somni (strain 129Pt)</name>
    <name type="common">Haemophilus somnus</name>
    <dbReference type="NCBI Taxonomy" id="205914"/>
    <lineage>
        <taxon>Bacteria</taxon>
        <taxon>Pseudomonadati</taxon>
        <taxon>Pseudomonadota</taxon>
        <taxon>Gammaproteobacteria</taxon>
        <taxon>Pasteurellales</taxon>
        <taxon>Pasteurellaceae</taxon>
        <taxon>Histophilus</taxon>
    </lineage>
</organism>
<protein>
    <recommendedName>
        <fullName evidence="1">Serine--tRNA ligase</fullName>
        <ecNumber evidence="1">6.1.1.11</ecNumber>
    </recommendedName>
    <alternativeName>
        <fullName evidence="1">Seryl-tRNA synthetase</fullName>
        <shortName evidence="1">SerRS</shortName>
    </alternativeName>
    <alternativeName>
        <fullName evidence="1">Seryl-tRNA(Ser/Sec) synthetase</fullName>
    </alternativeName>
</protein>
<proteinExistence type="inferred from homology"/>
<accession>Q0I471</accession>
<sequence>MIDPTLLRNNLSEIAEKLKVRRGFILDVNKFSQLEEQRKTLQIKTETLQAERNSRSKTIGAAKARGEDISTLLAEVDHMGAELNTVKEELANVLTEIEQLALTIPNIPADEVPLGKDDSDNKEVFRWGTPKKFDFEVKDHVALGEILGGLDFAAGVKLSGARFAVIKGQIARMHRALAQFMLDLHTEQHGYTEAYVPYLVNHATLYGTGQLPKFGEELFHIKPLENEQTYALIPTAEVPVTNLVRDEIIDEADLPIKMTAHTPCFRSEAGSYGRDTRGLIRMHQFDKVELVQIVEPEKSMEALEELTNQAEKVLQLLNLPYRKVLLCTGDMGFGATKTYDLEVWIPAQNTYREISSCSNMWDFQARRMQARCRAKGDKKTRLVHTLNGSGLAVGRTLVAILENYQNADGSITVPEVLRPYMNGIEIIGK</sequence>
<reference key="1">
    <citation type="journal article" date="2007" name="J. Bacteriol.">
        <title>Complete genome sequence of Haemophilus somnus (Histophilus somni) strain 129Pt and comparison to Haemophilus ducreyi 35000HP and Haemophilus influenzae Rd.</title>
        <authorList>
            <person name="Challacombe J.F."/>
            <person name="Duncan A.J."/>
            <person name="Brettin T.S."/>
            <person name="Bruce D."/>
            <person name="Chertkov O."/>
            <person name="Detter J.C."/>
            <person name="Han C.S."/>
            <person name="Misra M."/>
            <person name="Richardson P."/>
            <person name="Tapia R."/>
            <person name="Thayer N."/>
            <person name="Xie G."/>
            <person name="Inzana T.J."/>
        </authorList>
    </citation>
    <scope>NUCLEOTIDE SEQUENCE [LARGE SCALE GENOMIC DNA]</scope>
    <source>
        <strain>129Pt</strain>
    </source>
</reference>
<evidence type="ECO:0000255" key="1">
    <source>
        <dbReference type="HAMAP-Rule" id="MF_00176"/>
    </source>
</evidence>
<gene>
    <name evidence="1" type="primary">serS</name>
    <name type="ordered locus">HS_1075</name>
</gene>
<comment type="function">
    <text evidence="1">Catalyzes the attachment of serine to tRNA(Ser). Is also able to aminoacylate tRNA(Sec) with serine, to form the misacylated tRNA L-seryl-tRNA(Sec), which will be further converted into selenocysteinyl-tRNA(Sec).</text>
</comment>
<comment type="catalytic activity">
    <reaction evidence="1">
        <text>tRNA(Ser) + L-serine + ATP = L-seryl-tRNA(Ser) + AMP + diphosphate + H(+)</text>
        <dbReference type="Rhea" id="RHEA:12292"/>
        <dbReference type="Rhea" id="RHEA-COMP:9669"/>
        <dbReference type="Rhea" id="RHEA-COMP:9703"/>
        <dbReference type="ChEBI" id="CHEBI:15378"/>
        <dbReference type="ChEBI" id="CHEBI:30616"/>
        <dbReference type="ChEBI" id="CHEBI:33019"/>
        <dbReference type="ChEBI" id="CHEBI:33384"/>
        <dbReference type="ChEBI" id="CHEBI:78442"/>
        <dbReference type="ChEBI" id="CHEBI:78533"/>
        <dbReference type="ChEBI" id="CHEBI:456215"/>
        <dbReference type="EC" id="6.1.1.11"/>
    </reaction>
</comment>
<comment type="catalytic activity">
    <reaction evidence="1">
        <text>tRNA(Sec) + L-serine + ATP = L-seryl-tRNA(Sec) + AMP + diphosphate + H(+)</text>
        <dbReference type="Rhea" id="RHEA:42580"/>
        <dbReference type="Rhea" id="RHEA-COMP:9742"/>
        <dbReference type="Rhea" id="RHEA-COMP:10128"/>
        <dbReference type="ChEBI" id="CHEBI:15378"/>
        <dbReference type="ChEBI" id="CHEBI:30616"/>
        <dbReference type="ChEBI" id="CHEBI:33019"/>
        <dbReference type="ChEBI" id="CHEBI:33384"/>
        <dbReference type="ChEBI" id="CHEBI:78442"/>
        <dbReference type="ChEBI" id="CHEBI:78533"/>
        <dbReference type="ChEBI" id="CHEBI:456215"/>
        <dbReference type="EC" id="6.1.1.11"/>
    </reaction>
</comment>
<comment type="pathway">
    <text evidence="1">Aminoacyl-tRNA biosynthesis; selenocysteinyl-tRNA(Sec) biosynthesis; L-seryl-tRNA(Sec) from L-serine and tRNA(Sec): step 1/1.</text>
</comment>
<comment type="subunit">
    <text evidence="1">Homodimer. The tRNA molecule binds across the dimer.</text>
</comment>
<comment type="subcellular location">
    <subcellularLocation>
        <location evidence="1">Cytoplasm</location>
    </subcellularLocation>
</comment>
<comment type="domain">
    <text evidence="1">Consists of two distinct domains, a catalytic core and a N-terminal extension that is involved in tRNA binding.</text>
</comment>
<comment type="similarity">
    <text evidence="1">Belongs to the class-II aminoacyl-tRNA synthetase family. Type-1 seryl-tRNA synthetase subfamily.</text>
</comment>
<feature type="chain" id="PRO_1000019693" description="Serine--tRNA ligase">
    <location>
        <begin position="1"/>
        <end position="429"/>
    </location>
</feature>
<feature type="binding site" evidence="1">
    <location>
        <begin position="235"/>
        <end position="237"/>
    </location>
    <ligand>
        <name>L-serine</name>
        <dbReference type="ChEBI" id="CHEBI:33384"/>
    </ligand>
</feature>
<feature type="binding site" evidence="1">
    <location>
        <begin position="266"/>
        <end position="268"/>
    </location>
    <ligand>
        <name>ATP</name>
        <dbReference type="ChEBI" id="CHEBI:30616"/>
    </ligand>
</feature>
<feature type="binding site" evidence="1">
    <location>
        <position position="289"/>
    </location>
    <ligand>
        <name>L-serine</name>
        <dbReference type="ChEBI" id="CHEBI:33384"/>
    </ligand>
</feature>
<feature type="binding site" evidence="1">
    <location>
        <begin position="353"/>
        <end position="356"/>
    </location>
    <ligand>
        <name>ATP</name>
        <dbReference type="ChEBI" id="CHEBI:30616"/>
    </ligand>
</feature>
<feature type="binding site" evidence="1">
    <location>
        <position position="389"/>
    </location>
    <ligand>
        <name>L-serine</name>
        <dbReference type="ChEBI" id="CHEBI:33384"/>
    </ligand>
</feature>
<name>SYS_HISS1</name>